<name>RR15_ZYGCR</name>
<feature type="chain" id="PRO_0000115658" description="Small ribosomal subunit protein uS15c">
    <location>
        <begin position="1"/>
        <end position="87"/>
    </location>
</feature>
<feature type="region of interest" description="Disordered" evidence="2">
    <location>
        <begin position="1"/>
        <end position="20"/>
    </location>
</feature>
<comment type="subunit">
    <text evidence="1">Part of the 30S ribosomal subunit.</text>
</comment>
<comment type="subcellular location">
    <subcellularLocation>
        <location>Plastid</location>
        <location>Chloroplast</location>
    </subcellularLocation>
</comment>
<comment type="similarity">
    <text evidence="3">Belongs to the universal ribosomal protein uS15 family.</text>
</comment>
<reference key="1">
    <citation type="journal article" date="2005" name="BMC Biol.">
        <title>The complete chloroplast DNA sequences of the charophycean green algae Staurastrum and Zygnema reveal that the chloroplast genome underwent extensive changes during the evolution of the Zygnematales.</title>
        <authorList>
            <person name="Turmel M."/>
            <person name="Otis C."/>
            <person name="Lemieux C."/>
        </authorList>
    </citation>
    <scope>NUCLEOTIDE SEQUENCE [LARGE SCALE GENOMIC DNA]</scope>
</reference>
<accession>Q32RK4</accession>
<organism>
    <name type="scientific">Zygnema circumcarinatum</name>
    <name type="common">Green alga</name>
    <dbReference type="NCBI Taxonomy" id="35869"/>
    <lineage>
        <taxon>Eukaryota</taxon>
        <taxon>Viridiplantae</taxon>
        <taxon>Streptophyta</taxon>
        <taxon>Zygnematophyceae</taxon>
        <taxon>Zygnematophycidae</taxon>
        <taxon>Zygnematales</taxon>
        <taxon>Zygnemataceae</taxon>
        <taxon>Zygnema</taxon>
    </lineage>
</organism>
<sequence length="87" mass="10114">MNQNLSIRKRNKLKQDSGSPEAQISFLTLRVLQISSHLKMHTKDYSSKRGLRKVLGTRKRLLSYLCREDVSRYNKLLNNLGIRAAKK</sequence>
<protein>
    <recommendedName>
        <fullName evidence="3">Small ribosomal subunit protein uS15c</fullName>
    </recommendedName>
    <alternativeName>
        <fullName>30S ribosomal protein S15, chloroplastic</fullName>
    </alternativeName>
</protein>
<evidence type="ECO:0000250" key="1"/>
<evidence type="ECO:0000256" key="2">
    <source>
        <dbReference type="SAM" id="MobiDB-lite"/>
    </source>
</evidence>
<evidence type="ECO:0000305" key="3"/>
<dbReference type="EMBL" id="AY958086">
    <property type="protein sequence ID" value="AAX45868.1"/>
    <property type="molecule type" value="Genomic_DNA"/>
</dbReference>
<dbReference type="RefSeq" id="YP_636522.1">
    <property type="nucleotide sequence ID" value="NC_008117.1"/>
</dbReference>
<dbReference type="SMR" id="Q32RK4"/>
<dbReference type="GeneID" id="4108188"/>
<dbReference type="GO" id="GO:0009507">
    <property type="term" value="C:chloroplast"/>
    <property type="evidence" value="ECO:0007669"/>
    <property type="project" value="UniProtKB-SubCell"/>
</dbReference>
<dbReference type="GO" id="GO:1990904">
    <property type="term" value="C:ribonucleoprotein complex"/>
    <property type="evidence" value="ECO:0007669"/>
    <property type="project" value="UniProtKB-KW"/>
</dbReference>
<dbReference type="GO" id="GO:0005840">
    <property type="term" value="C:ribosome"/>
    <property type="evidence" value="ECO:0007669"/>
    <property type="project" value="UniProtKB-KW"/>
</dbReference>
<dbReference type="GO" id="GO:0003735">
    <property type="term" value="F:structural constituent of ribosome"/>
    <property type="evidence" value="ECO:0007669"/>
    <property type="project" value="InterPro"/>
</dbReference>
<dbReference type="GO" id="GO:0006412">
    <property type="term" value="P:translation"/>
    <property type="evidence" value="ECO:0007669"/>
    <property type="project" value="UniProtKB-UniRule"/>
</dbReference>
<dbReference type="CDD" id="cd00677">
    <property type="entry name" value="S15_NS1_EPRS_RNA-bind"/>
    <property type="match status" value="1"/>
</dbReference>
<dbReference type="Gene3D" id="1.10.287.10">
    <property type="entry name" value="S15/NS1, RNA-binding"/>
    <property type="match status" value="1"/>
</dbReference>
<dbReference type="HAMAP" id="MF_01343_B">
    <property type="entry name" value="Ribosomal_uS15_B"/>
    <property type="match status" value="1"/>
</dbReference>
<dbReference type="InterPro" id="IPR000589">
    <property type="entry name" value="Ribosomal_uS15"/>
</dbReference>
<dbReference type="InterPro" id="IPR005290">
    <property type="entry name" value="Ribosomal_uS15_bac-type"/>
</dbReference>
<dbReference type="InterPro" id="IPR009068">
    <property type="entry name" value="uS15_NS1_RNA-bd_sf"/>
</dbReference>
<dbReference type="NCBIfam" id="TIGR00952">
    <property type="entry name" value="S15_bact"/>
    <property type="match status" value="1"/>
</dbReference>
<dbReference type="PANTHER" id="PTHR23321">
    <property type="entry name" value="RIBOSOMAL PROTEIN S15, BACTERIAL AND ORGANELLAR"/>
    <property type="match status" value="1"/>
</dbReference>
<dbReference type="PANTHER" id="PTHR23321:SF26">
    <property type="entry name" value="SMALL RIBOSOMAL SUBUNIT PROTEIN US15M"/>
    <property type="match status" value="1"/>
</dbReference>
<dbReference type="Pfam" id="PF00312">
    <property type="entry name" value="Ribosomal_S15"/>
    <property type="match status" value="1"/>
</dbReference>
<dbReference type="SMART" id="SM01387">
    <property type="entry name" value="Ribosomal_S15"/>
    <property type="match status" value="1"/>
</dbReference>
<dbReference type="SUPFAM" id="SSF47060">
    <property type="entry name" value="S15/NS1 RNA-binding domain"/>
    <property type="match status" value="1"/>
</dbReference>
<dbReference type="PROSITE" id="PS00362">
    <property type="entry name" value="RIBOSOMAL_S15"/>
    <property type="match status" value="1"/>
</dbReference>
<gene>
    <name type="primary">rps15</name>
</gene>
<keyword id="KW-0150">Chloroplast</keyword>
<keyword id="KW-0934">Plastid</keyword>
<keyword id="KW-0687">Ribonucleoprotein</keyword>
<keyword id="KW-0689">Ribosomal protein</keyword>
<geneLocation type="chloroplast"/>
<proteinExistence type="inferred from homology"/>